<evidence type="ECO:0000255" key="1">
    <source>
        <dbReference type="HAMAP-Rule" id="MF_01342"/>
    </source>
</evidence>
<evidence type="ECO:0000256" key="2">
    <source>
        <dbReference type="SAM" id="MobiDB-lite"/>
    </source>
</evidence>
<evidence type="ECO:0000305" key="3"/>
<sequence>MLIPRKVKHRKQHHPKKKGTASGGTTVAFGDYGIQALGHAYITNRQIESARIAINRHIKRGGKVWINIFPDRPLTKKPAETRMGSGKGSPEWWVANVKPGRVLFELSYPNEETARQALTRAIHKLPIKARIITREEQF</sequence>
<dbReference type="EMBL" id="CU458896">
    <property type="protein sequence ID" value="CAM63888.1"/>
    <property type="molecule type" value="Genomic_DNA"/>
</dbReference>
<dbReference type="RefSeq" id="WP_005055656.1">
    <property type="nucleotide sequence ID" value="NZ_MLCG01000001.1"/>
</dbReference>
<dbReference type="SMR" id="B1MGE3"/>
<dbReference type="GeneID" id="93380752"/>
<dbReference type="KEGG" id="mab:MAB_3813c"/>
<dbReference type="Proteomes" id="UP000007137">
    <property type="component" value="Chromosome"/>
</dbReference>
<dbReference type="GO" id="GO:0022625">
    <property type="term" value="C:cytosolic large ribosomal subunit"/>
    <property type="evidence" value="ECO:0007669"/>
    <property type="project" value="TreeGrafter"/>
</dbReference>
<dbReference type="GO" id="GO:0019843">
    <property type="term" value="F:rRNA binding"/>
    <property type="evidence" value="ECO:0007669"/>
    <property type="project" value="UniProtKB-UniRule"/>
</dbReference>
<dbReference type="GO" id="GO:0003735">
    <property type="term" value="F:structural constituent of ribosome"/>
    <property type="evidence" value="ECO:0007669"/>
    <property type="project" value="InterPro"/>
</dbReference>
<dbReference type="GO" id="GO:0000049">
    <property type="term" value="F:tRNA binding"/>
    <property type="evidence" value="ECO:0007669"/>
    <property type="project" value="UniProtKB-KW"/>
</dbReference>
<dbReference type="GO" id="GO:0006412">
    <property type="term" value="P:translation"/>
    <property type="evidence" value="ECO:0007669"/>
    <property type="project" value="UniProtKB-UniRule"/>
</dbReference>
<dbReference type="CDD" id="cd01433">
    <property type="entry name" value="Ribosomal_L16_L10e"/>
    <property type="match status" value="1"/>
</dbReference>
<dbReference type="FunFam" id="3.90.1170.10:FF:000001">
    <property type="entry name" value="50S ribosomal protein L16"/>
    <property type="match status" value="1"/>
</dbReference>
<dbReference type="Gene3D" id="3.90.1170.10">
    <property type="entry name" value="Ribosomal protein L10e/L16"/>
    <property type="match status" value="1"/>
</dbReference>
<dbReference type="HAMAP" id="MF_01342">
    <property type="entry name" value="Ribosomal_uL16"/>
    <property type="match status" value="1"/>
</dbReference>
<dbReference type="InterPro" id="IPR047873">
    <property type="entry name" value="Ribosomal_uL16"/>
</dbReference>
<dbReference type="InterPro" id="IPR000114">
    <property type="entry name" value="Ribosomal_uL16_bact-type"/>
</dbReference>
<dbReference type="InterPro" id="IPR020798">
    <property type="entry name" value="Ribosomal_uL16_CS"/>
</dbReference>
<dbReference type="InterPro" id="IPR016180">
    <property type="entry name" value="Ribosomal_uL16_dom"/>
</dbReference>
<dbReference type="InterPro" id="IPR036920">
    <property type="entry name" value="Ribosomal_uL16_sf"/>
</dbReference>
<dbReference type="NCBIfam" id="TIGR01164">
    <property type="entry name" value="rplP_bact"/>
    <property type="match status" value="1"/>
</dbReference>
<dbReference type="PANTHER" id="PTHR12220">
    <property type="entry name" value="50S/60S RIBOSOMAL PROTEIN L16"/>
    <property type="match status" value="1"/>
</dbReference>
<dbReference type="PANTHER" id="PTHR12220:SF13">
    <property type="entry name" value="LARGE RIBOSOMAL SUBUNIT PROTEIN UL16M"/>
    <property type="match status" value="1"/>
</dbReference>
<dbReference type="Pfam" id="PF00252">
    <property type="entry name" value="Ribosomal_L16"/>
    <property type="match status" value="1"/>
</dbReference>
<dbReference type="PRINTS" id="PR00060">
    <property type="entry name" value="RIBOSOMALL16"/>
</dbReference>
<dbReference type="SUPFAM" id="SSF54686">
    <property type="entry name" value="Ribosomal protein L16p/L10e"/>
    <property type="match status" value="1"/>
</dbReference>
<dbReference type="PROSITE" id="PS00586">
    <property type="entry name" value="RIBOSOMAL_L16_1"/>
    <property type="match status" value="1"/>
</dbReference>
<dbReference type="PROSITE" id="PS00701">
    <property type="entry name" value="RIBOSOMAL_L16_2"/>
    <property type="match status" value="1"/>
</dbReference>
<keyword id="KW-1185">Reference proteome</keyword>
<keyword id="KW-0687">Ribonucleoprotein</keyword>
<keyword id="KW-0689">Ribosomal protein</keyword>
<keyword id="KW-0694">RNA-binding</keyword>
<keyword id="KW-0699">rRNA-binding</keyword>
<keyword id="KW-0820">tRNA-binding</keyword>
<protein>
    <recommendedName>
        <fullName evidence="1">Large ribosomal subunit protein uL16</fullName>
    </recommendedName>
    <alternativeName>
        <fullName evidence="3">50S ribosomal protein L16</fullName>
    </alternativeName>
</protein>
<accession>B1MGE3</accession>
<gene>
    <name evidence="1" type="primary">rplP</name>
    <name type="ordered locus">MAB_3813c</name>
</gene>
<proteinExistence type="inferred from homology"/>
<organism>
    <name type="scientific">Mycobacteroides abscessus (strain ATCC 19977 / DSM 44196 / CCUG 20993 / CIP 104536 / JCM 13569 / NCTC 13031 / TMC 1543 / L948)</name>
    <name type="common">Mycobacterium abscessus</name>
    <dbReference type="NCBI Taxonomy" id="561007"/>
    <lineage>
        <taxon>Bacteria</taxon>
        <taxon>Bacillati</taxon>
        <taxon>Actinomycetota</taxon>
        <taxon>Actinomycetes</taxon>
        <taxon>Mycobacteriales</taxon>
        <taxon>Mycobacteriaceae</taxon>
        <taxon>Mycobacteroides</taxon>
        <taxon>Mycobacteroides abscessus</taxon>
    </lineage>
</organism>
<reference key="1">
    <citation type="journal article" date="2009" name="PLoS ONE">
        <title>Non mycobacterial virulence genes in the genome of the emerging pathogen Mycobacterium abscessus.</title>
        <authorList>
            <person name="Ripoll F."/>
            <person name="Pasek S."/>
            <person name="Schenowitz C."/>
            <person name="Dossat C."/>
            <person name="Barbe V."/>
            <person name="Rottman M."/>
            <person name="Macheras E."/>
            <person name="Heym B."/>
            <person name="Herrmann J.L."/>
            <person name="Daffe M."/>
            <person name="Brosch R."/>
            <person name="Risler J.L."/>
            <person name="Gaillard J.L."/>
        </authorList>
    </citation>
    <scope>NUCLEOTIDE SEQUENCE [LARGE SCALE GENOMIC DNA]</scope>
    <source>
        <strain>ATCC 19977 / DSM 44196 / CCUG 20993 / CIP 104536 / JCM 13569 / NCTC 13031 / TMC 1543 / L948</strain>
    </source>
</reference>
<feature type="chain" id="PRO_1000142998" description="Large ribosomal subunit protein uL16">
    <location>
        <begin position="1"/>
        <end position="138"/>
    </location>
</feature>
<feature type="region of interest" description="Disordered" evidence="2">
    <location>
        <begin position="1"/>
        <end position="24"/>
    </location>
</feature>
<feature type="compositionally biased region" description="Basic residues" evidence="2">
    <location>
        <begin position="1"/>
        <end position="19"/>
    </location>
</feature>
<comment type="function">
    <text evidence="1">Binds 23S rRNA and is also seen to make contacts with the A and possibly P site tRNAs.</text>
</comment>
<comment type="subunit">
    <text evidence="1">Part of the 50S ribosomal subunit.</text>
</comment>
<comment type="similarity">
    <text evidence="1">Belongs to the universal ribosomal protein uL16 family.</text>
</comment>
<name>RL16_MYCA9</name>